<organism>
    <name type="scientific">Christiangramia forsetii (strain DSM 17595 / CGMCC 1.15422 / KT0803)</name>
    <name type="common">Gramella forsetii</name>
    <dbReference type="NCBI Taxonomy" id="411154"/>
    <lineage>
        <taxon>Bacteria</taxon>
        <taxon>Pseudomonadati</taxon>
        <taxon>Bacteroidota</taxon>
        <taxon>Flavobacteriia</taxon>
        <taxon>Flavobacteriales</taxon>
        <taxon>Flavobacteriaceae</taxon>
        <taxon>Christiangramia</taxon>
    </lineage>
</organism>
<accession>A0M380</accession>
<gene>
    <name evidence="1" type="primary">ilvC</name>
    <name type="ordered locus">GFO_2110</name>
</gene>
<name>ILVC_CHRFK</name>
<sequence>MTNYFNSLSLRDQLAQLGTCRFMELDEFSNEVAVLKDKKIVIVGCGAQGLNQGLNMRDSGLDISYALREGAIKEKRQSWKNATENNFNVGTYEELIPKADLVINLTPDKQHTSVIKAIQPHIKKDAVLSYSHGFNIVEEGTKIREDITVIMVAPKCPGTEVREEYKRGFGVPTLIAVHPENDPHGIGLDWAKAYAYATGGHRAGVLESSFVAEVKSDLMGEQTMLCGVLQTGSILTFDKMVADGVEPNYAAKLIQYGWETITEALKHGGITNMMDRLSNPAKLRANEIAEELKEKMRPLFQKHMDDIISGEFSSRMMRDWANDDKELLTWRAETENTAFEKTEATSEEIKEQEYFDKGVLMVAFVRAGVELAFETMVEAGIIEESAYYESLHETPLIANTIARKKLYEMNRVISDTAEYGCYLFDHAAKPLVKDYVNSLEPEVAGKKFGTDCNGVDNQKLIHVNDDLRSHPVEKVGARLRTAMTAMKKIYA</sequence>
<reference key="1">
    <citation type="journal article" date="2006" name="Environ. Microbiol.">
        <title>Whole genome analysis of the marine Bacteroidetes'Gramella forsetii' reveals adaptations to degradation of polymeric organic matter.</title>
        <authorList>
            <person name="Bauer M."/>
            <person name="Kube M."/>
            <person name="Teeling H."/>
            <person name="Richter M."/>
            <person name="Lombardot T."/>
            <person name="Allers E."/>
            <person name="Wuerdemann C.A."/>
            <person name="Quast C."/>
            <person name="Kuhl H."/>
            <person name="Knaust F."/>
            <person name="Woebken D."/>
            <person name="Bischof K."/>
            <person name="Mussmann M."/>
            <person name="Choudhuri J.V."/>
            <person name="Meyer F."/>
            <person name="Reinhardt R."/>
            <person name="Amann R.I."/>
            <person name="Gloeckner F.O."/>
        </authorList>
    </citation>
    <scope>NUCLEOTIDE SEQUENCE [LARGE SCALE GENOMIC DNA]</scope>
    <source>
        <strain>DSM 17595 / CGMCC 1.15422 / KT0803</strain>
    </source>
</reference>
<dbReference type="EC" id="1.1.1.86" evidence="1"/>
<dbReference type="EMBL" id="CU207366">
    <property type="protein sequence ID" value="CAL67075.1"/>
    <property type="molecule type" value="Genomic_DNA"/>
</dbReference>
<dbReference type="RefSeq" id="WP_011709978.1">
    <property type="nucleotide sequence ID" value="NC_008571.1"/>
</dbReference>
<dbReference type="SMR" id="A0M380"/>
<dbReference type="STRING" id="411154.GFO_2110"/>
<dbReference type="KEGG" id="gfo:GFO_2110"/>
<dbReference type="eggNOG" id="COG0059">
    <property type="taxonomic scope" value="Bacteria"/>
</dbReference>
<dbReference type="HOGENOM" id="CLU_551905_0_0_10"/>
<dbReference type="OrthoDB" id="9804088at2"/>
<dbReference type="UniPathway" id="UPA00047">
    <property type="reaction ID" value="UER00056"/>
</dbReference>
<dbReference type="UniPathway" id="UPA00049">
    <property type="reaction ID" value="UER00060"/>
</dbReference>
<dbReference type="Proteomes" id="UP000000755">
    <property type="component" value="Chromosome"/>
</dbReference>
<dbReference type="GO" id="GO:0005829">
    <property type="term" value="C:cytosol"/>
    <property type="evidence" value="ECO:0007669"/>
    <property type="project" value="TreeGrafter"/>
</dbReference>
<dbReference type="GO" id="GO:0004455">
    <property type="term" value="F:ketol-acid reductoisomerase activity"/>
    <property type="evidence" value="ECO:0007669"/>
    <property type="project" value="UniProtKB-UniRule"/>
</dbReference>
<dbReference type="GO" id="GO:0000287">
    <property type="term" value="F:magnesium ion binding"/>
    <property type="evidence" value="ECO:0007669"/>
    <property type="project" value="UniProtKB-UniRule"/>
</dbReference>
<dbReference type="GO" id="GO:0009097">
    <property type="term" value="P:isoleucine biosynthetic process"/>
    <property type="evidence" value="ECO:0007669"/>
    <property type="project" value="UniProtKB-UniRule"/>
</dbReference>
<dbReference type="GO" id="GO:0009099">
    <property type="term" value="P:L-valine biosynthetic process"/>
    <property type="evidence" value="ECO:0007669"/>
    <property type="project" value="UniProtKB-UniRule"/>
</dbReference>
<dbReference type="Gene3D" id="1.10.1040.10">
    <property type="entry name" value="N-(1-d-carboxylethyl)-l-norvaline Dehydrogenase, domain 2"/>
    <property type="match status" value="1"/>
</dbReference>
<dbReference type="Gene3D" id="3.40.50.720">
    <property type="entry name" value="NAD(P)-binding Rossmann-like Domain"/>
    <property type="match status" value="1"/>
</dbReference>
<dbReference type="HAMAP" id="MF_00435">
    <property type="entry name" value="IlvC"/>
    <property type="match status" value="1"/>
</dbReference>
<dbReference type="InterPro" id="IPR008927">
    <property type="entry name" value="6-PGluconate_DH-like_C_sf"/>
</dbReference>
<dbReference type="InterPro" id="IPR013328">
    <property type="entry name" value="6PGD_dom2"/>
</dbReference>
<dbReference type="InterPro" id="IPR013023">
    <property type="entry name" value="KARI"/>
</dbReference>
<dbReference type="InterPro" id="IPR000506">
    <property type="entry name" value="KARI_C"/>
</dbReference>
<dbReference type="InterPro" id="IPR013116">
    <property type="entry name" value="KARI_N"/>
</dbReference>
<dbReference type="InterPro" id="IPR036291">
    <property type="entry name" value="NAD(P)-bd_dom_sf"/>
</dbReference>
<dbReference type="NCBIfam" id="TIGR00465">
    <property type="entry name" value="ilvC"/>
    <property type="match status" value="1"/>
</dbReference>
<dbReference type="NCBIfam" id="NF003557">
    <property type="entry name" value="PRK05225.1"/>
    <property type="match status" value="1"/>
</dbReference>
<dbReference type="PANTHER" id="PTHR21371">
    <property type="entry name" value="KETOL-ACID REDUCTOISOMERASE, MITOCHONDRIAL"/>
    <property type="match status" value="1"/>
</dbReference>
<dbReference type="PANTHER" id="PTHR21371:SF1">
    <property type="entry name" value="KETOL-ACID REDUCTOISOMERASE, MITOCHONDRIAL"/>
    <property type="match status" value="1"/>
</dbReference>
<dbReference type="Pfam" id="PF01450">
    <property type="entry name" value="KARI_C"/>
    <property type="match status" value="2"/>
</dbReference>
<dbReference type="Pfam" id="PF07991">
    <property type="entry name" value="KARI_N"/>
    <property type="match status" value="1"/>
</dbReference>
<dbReference type="SUPFAM" id="SSF48179">
    <property type="entry name" value="6-phosphogluconate dehydrogenase C-terminal domain-like"/>
    <property type="match status" value="2"/>
</dbReference>
<dbReference type="SUPFAM" id="SSF51735">
    <property type="entry name" value="NAD(P)-binding Rossmann-fold domains"/>
    <property type="match status" value="1"/>
</dbReference>
<dbReference type="PROSITE" id="PS51851">
    <property type="entry name" value="KARI_C"/>
    <property type="match status" value="2"/>
</dbReference>
<dbReference type="PROSITE" id="PS51850">
    <property type="entry name" value="KARI_N"/>
    <property type="match status" value="1"/>
</dbReference>
<feature type="chain" id="PRO_1000190969" description="Ketol-acid reductoisomerase (NADP(+))">
    <location>
        <begin position="1"/>
        <end position="491"/>
    </location>
</feature>
<feature type="domain" description="KARI N-terminal Rossmann" evidence="2">
    <location>
        <begin position="15"/>
        <end position="208"/>
    </location>
</feature>
<feature type="domain" description="KARI C-terminal knotted 1" evidence="3">
    <location>
        <begin position="209"/>
        <end position="353"/>
    </location>
</feature>
<feature type="domain" description="KARI C-terminal knotted 2" evidence="3">
    <location>
        <begin position="354"/>
        <end position="486"/>
    </location>
</feature>
<feature type="active site" evidence="1">
    <location>
        <position position="132"/>
    </location>
</feature>
<feature type="binding site" evidence="1">
    <location>
        <begin position="45"/>
        <end position="48"/>
    </location>
    <ligand>
        <name>NADP(+)</name>
        <dbReference type="ChEBI" id="CHEBI:58349"/>
    </ligand>
</feature>
<feature type="binding site" evidence="1">
    <location>
        <position position="68"/>
    </location>
    <ligand>
        <name>NADP(+)</name>
        <dbReference type="ChEBI" id="CHEBI:58349"/>
    </ligand>
</feature>
<feature type="binding site" evidence="1">
    <location>
        <position position="76"/>
    </location>
    <ligand>
        <name>NADP(+)</name>
        <dbReference type="ChEBI" id="CHEBI:58349"/>
    </ligand>
</feature>
<feature type="binding site" evidence="1">
    <location>
        <position position="78"/>
    </location>
    <ligand>
        <name>NADP(+)</name>
        <dbReference type="ChEBI" id="CHEBI:58349"/>
    </ligand>
</feature>
<feature type="binding site" evidence="1">
    <location>
        <begin position="108"/>
        <end position="110"/>
    </location>
    <ligand>
        <name>NADP(+)</name>
        <dbReference type="ChEBI" id="CHEBI:58349"/>
    </ligand>
</feature>
<feature type="binding site" evidence="1">
    <location>
        <position position="158"/>
    </location>
    <ligand>
        <name>NADP(+)</name>
        <dbReference type="ChEBI" id="CHEBI:58349"/>
    </ligand>
</feature>
<feature type="binding site" evidence="1">
    <location>
        <position position="217"/>
    </location>
    <ligand>
        <name>Mg(2+)</name>
        <dbReference type="ChEBI" id="CHEBI:18420"/>
        <label>1</label>
    </ligand>
</feature>
<feature type="binding site" evidence="1">
    <location>
        <position position="217"/>
    </location>
    <ligand>
        <name>Mg(2+)</name>
        <dbReference type="ChEBI" id="CHEBI:18420"/>
        <label>2</label>
    </ligand>
</feature>
<feature type="binding site" evidence="1">
    <location>
        <position position="221"/>
    </location>
    <ligand>
        <name>Mg(2+)</name>
        <dbReference type="ChEBI" id="CHEBI:18420"/>
        <label>1</label>
    </ligand>
</feature>
<feature type="binding site" evidence="1">
    <location>
        <position position="389"/>
    </location>
    <ligand>
        <name>Mg(2+)</name>
        <dbReference type="ChEBI" id="CHEBI:18420"/>
        <label>2</label>
    </ligand>
</feature>
<feature type="binding site" evidence="1">
    <location>
        <position position="393"/>
    </location>
    <ligand>
        <name>Mg(2+)</name>
        <dbReference type="ChEBI" id="CHEBI:18420"/>
        <label>2</label>
    </ligand>
</feature>
<feature type="binding site" evidence="1">
    <location>
        <position position="414"/>
    </location>
    <ligand>
        <name>substrate</name>
    </ligand>
</feature>
<evidence type="ECO:0000255" key="1">
    <source>
        <dbReference type="HAMAP-Rule" id="MF_00435"/>
    </source>
</evidence>
<evidence type="ECO:0000255" key="2">
    <source>
        <dbReference type="PROSITE-ProRule" id="PRU01197"/>
    </source>
</evidence>
<evidence type="ECO:0000255" key="3">
    <source>
        <dbReference type="PROSITE-ProRule" id="PRU01198"/>
    </source>
</evidence>
<keyword id="KW-0028">Amino-acid biosynthesis</keyword>
<keyword id="KW-0100">Branched-chain amino acid biosynthesis</keyword>
<keyword id="KW-0460">Magnesium</keyword>
<keyword id="KW-0479">Metal-binding</keyword>
<keyword id="KW-0521">NADP</keyword>
<keyword id="KW-0560">Oxidoreductase</keyword>
<keyword id="KW-0677">Repeat</keyword>
<protein>
    <recommendedName>
        <fullName evidence="1">Ketol-acid reductoisomerase (NADP(+))</fullName>
        <shortName evidence="1">KARI</shortName>
        <ecNumber evidence="1">1.1.1.86</ecNumber>
    </recommendedName>
    <alternativeName>
        <fullName evidence="1">Acetohydroxy-acid isomeroreductase</fullName>
        <shortName evidence="1">AHIR</shortName>
    </alternativeName>
    <alternativeName>
        <fullName evidence="1">Alpha-keto-beta-hydroxylacyl reductoisomerase</fullName>
    </alternativeName>
    <alternativeName>
        <fullName evidence="1">Ketol-acid reductoisomerase type 2</fullName>
    </alternativeName>
    <alternativeName>
        <fullName evidence="1">Ketol-acid reductoisomerase type II</fullName>
    </alternativeName>
</protein>
<proteinExistence type="inferred from homology"/>
<comment type="function">
    <text evidence="1">Involved in the biosynthesis of branched-chain amino acids (BCAA). Catalyzes an alkyl-migration followed by a ketol-acid reduction of (S)-2-acetolactate (S2AL) to yield (R)-2,3-dihydroxy-isovalerate. In the isomerase reaction, S2AL is rearranged via a Mg-dependent methyl migration to produce 3-hydroxy-3-methyl-2-ketobutyrate (HMKB). In the reductase reaction, this 2-ketoacid undergoes a metal-dependent reduction by NADPH to yield (R)-2,3-dihydroxy-isovalerate.</text>
</comment>
<comment type="catalytic activity">
    <reaction evidence="1">
        <text>(2R)-2,3-dihydroxy-3-methylbutanoate + NADP(+) = (2S)-2-acetolactate + NADPH + H(+)</text>
        <dbReference type="Rhea" id="RHEA:22068"/>
        <dbReference type="ChEBI" id="CHEBI:15378"/>
        <dbReference type="ChEBI" id="CHEBI:49072"/>
        <dbReference type="ChEBI" id="CHEBI:57783"/>
        <dbReference type="ChEBI" id="CHEBI:58349"/>
        <dbReference type="ChEBI" id="CHEBI:58476"/>
        <dbReference type="EC" id="1.1.1.86"/>
    </reaction>
</comment>
<comment type="catalytic activity">
    <reaction evidence="1">
        <text>(2R,3R)-2,3-dihydroxy-3-methylpentanoate + NADP(+) = (S)-2-ethyl-2-hydroxy-3-oxobutanoate + NADPH + H(+)</text>
        <dbReference type="Rhea" id="RHEA:13493"/>
        <dbReference type="ChEBI" id="CHEBI:15378"/>
        <dbReference type="ChEBI" id="CHEBI:49256"/>
        <dbReference type="ChEBI" id="CHEBI:49258"/>
        <dbReference type="ChEBI" id="CHEBI:57783"/>
        <dbReference type="ChEBI" id="CHEBI:58349"/>
        <dbReference type="EC" id="1.1.1.86"/>
    </reaction>
</comment>
<comment type="cofactor">
    <cofactor evidence="1">
        <name>Mg(2+)</name>
        <dbReference type="ChEBI" id="CHEBI:18420"/>
    </cofactor>
    <text evidence="1">Binds 2 magnesium ions per subunit.</text>
</comment>
<comment type="pathway">
    <text evidence="1">Amino-acid biosynthesis; L-isoleucine biosynthesis; L-isoleucine from 2-oxobutanoate: step 2/4.</text>
</comment>
<comment type="pathway">
    <text evidence="1">Amino-acid biosynthesis; L-valine biosynthesis; L-valine from pyruvate: step 2/4.</text>
</comment>
<comment type="similarity">
    <text evidence="1">Belongs to the ketol-acid reductoisomerase family.</text>
</comment>